<accession>B4IXG1</accession>
<proteinExistence type="inferred from homology"/>
<feature type="chain" id="PRO_0000365965" description="Eukaryotic translation initiation factor 3 subunit E">
    <location>
        <begin position="1"/>
        <end position="434"/>
    </location>
</feature>
<feature type="domain" description="PCI" evidence="3">
    <location>
        <begin position="219"/>
        <end position="392"/>
    </location>
</feature>
<organism>
    <name type="scientific">Drosophila grimshawi</name>
    <name type="common">Hawaiian fruit fly</name>
    <name type="synonym">Idiomyia grimshawi</name>
    <dbReference type="NCBI Taxonomy" id="7222"/>
    <lineage>
        <taxon>Eukaryota</taxon>
        <taxon>Metazoa</taxon>
        <taxon>Ecdysozoa</taxon>
        <taxon>Arthropoda</taxon>
        <taxon>Hexapoda</taxon>
        <taxon>Insecta</taxon>
        <taxon>Pterygota</taxon>
        <taxon>Neoptera</taxon>
        <taxon>Endopterygota</taxon>
        <taxon>Diptera</taxon>
        <taxon>Brachycera</taxon>
        <taxon>Muscomorpha</taxon>
        <taxon>Ephydroidea</taxon>
        <taxon>Drosophilidae</taxon>
        <taxon>Drosophila</taxon>
        <taxon>Hawaiian Drosophila</taxon>
    </lineage>
</organism>
<evidence type="ECO:0000250" key="1">
    <source>
        <dbReference type="UniProtKB" id="O77410"/>
    </source>
</evidence>
<evidence type="ECO:0000255" key="2">
    <source>
        <dbReference type="HAMAP-Rule" id="MF_03004"/>
    </source>
</evidence>
<evidence type="ECO:0000255" key="3">
    <source>
        <dbReference type="PROSITE-ProRule" id="PRU01185"/>
    </source>
</evidence>
<keyword id="KW-0963">Cytoplasm</keyword>
<keyword id="KW-0396">Initiation factor</keyword>
<keyword id="KW-0648">Protein biosynthesis</keyword>
<keyword id="KW-1185">Reference proteome</keyword>
<reference key="1">
    <citation type="journal article" date="2007" name="Nature">
        <title>Evolution of genes and genomes on the Drosophila phylogeny.</title>
        <authorList>
            <consortium name="Drosophila 12 genomes consortium"/>
        </authorList>
    </citation>
    <scope>NUCLEOTIDE SEQUENCE [LARGE SCALE GENOMIC DNA]</scope>
    <source>
        <strain>Tucson 15287-2541.00</strain>
    </source>
</reference>
<gene>
    <name type="primary">eIF3-S6</name>
    <name type="synonym">Int6</name>
    <name type="ORF">GH15221</name>
</gene>
<protein>
    <recommendedName>
        <fullName evidence="2">Eukaryotic translation initiation factor 3 subunit E</fullName>
        <shortName evidence="2">eIF3e</shortName>
    </recommendedName>
    <alternativeName>
        <fullName evidence="2">Eukaryotic translation initiation factor 3 subunit 6</fullName>
    </alternativeName>
</protein>
<sequence length="434" mass="50983">MAQFDLTRINCQYLDRHLTFPLLEFLCGKEIYNQQDLLEYILDTVNKTNMIDYTMDTRKRLNLSQDMPDELVQRKSDVLATLKQLQNEVAPIMKATDILKNGESMKDSKTFVNALQKDYNFKVEHLESAYKLAKYLYECGNYQESTSYLYFCLIVMSPNDKNYLNVLWGKLAAEILTLNWNTALEDLTRLRDYIDSANFSTIQALQQRTWLIHWSVLVFFNHPKGRDLIIEMFLYKPLYLNAIQTMCPHIMRYLATAVVINRTRRNALKDLIKVIQQESYTYRDPITEFLECLYVNFDFEGARLKLHECQTVILNDFFIVACLNEFVEDARLMIFETFCRIHQCITISMLADKLNMKPNEAECWIVNLIRNARLNAKIDSKLGHVVMGTQPLSPYQQLVEKIDSLSMRSEHLAGLIERKSKQKNQESADSWKYY</sequence>
<dbReference type="EMBL" id="CH916366">
    <property type="protein sequence ID" value="EDV96398.1"/>
    <property type="molecule type" value="Genomic_DNA"/>
</dbReference>
<dbReference type="SMR" id="B4IXG1"/>
<dbReference type="FunCoup" id="B4IXG1">
    <property type="interactions" value="2539"/>
</dbReference>
<dbReference type="STRING" id="7222.B4IXG1"/>
<dbReference type="EnsemblMetazoa" id="FBtr0150635">
    <property type="protein sequence ID" value="FBpp0149127"/>
    <property type="gene ID" value="FBgn0122696"/>
</dbReference>
<dbReference type="EnsemblMetazoa" id="XM_001984014.3">
    <property type="protein sequence ID" value="XP_001984050.1"/>
    <property type="gene ID" value="LOC6557962"/>
</dbReference>
<dbReference type="GeneID" id="6557962"/>
<dbReference type="KEGG" id="dgr:6557962"/>
<dbReference type="CTD" id="3646"/>
<dbReference type="eggNOG" id="KOG2758">
    <property type="taxonomic scope" value="Eukaryota"/>
</dbReference>
<dbReference type="HOGENOM" id="CLU_031132_0_0_1"/>
<dbReference type="InParanoid" id="B4IXG1"/>
<dbReference type="OMA" id="NCPWILR"/>
<dbReference type="OrthoDB" id="417252at2759"/>
<dbReference type="PhylomeDB" id="B4IXG1"/>
<dbReference type="Proteomes" id="UP000001070">
    <property type="component" value="Unassembled WGS sequence"/>
</dbReference>
<dbReference type="GO" id="GO:0016282">
    <property type="term" value="C:eukaryotic 43S preinitiation complex"/>
    <property type="evidence" value="ECO:0007669"/>
    <property type="project" value="UniProtKB-UniRule"/>
</dbReference>
<dbReference type="GO" id="GO:0033290">
    <property type="term" value="C:eukaryotic 48S preinitiation complex"/>
    <property type="evidence" value="ECO:0007669"/>
    <property type="project" value="UniProtKB-UniRule"/>
</dbReference>
<dbReference type="GO" id="GO:0071540">
    <property type="term" value="C:eukaryotic translation initiation factor 3 complex, eIF3e"/>
    <property type="evidence" value="ECO:0007669"/>
    <property type="project" value="UniProtKB-UniRule"/>
</dbReference>
<dbReference type="GO" id="GO:0043231">
    <property type="term" value="C:intracellular membrane-bounded organelle"/>
    <property type="evidence" value="ECO:0007669"/>
    <property type="project" value="EnsemblMetazoa"/>
</dbReference>
<dbReference type="GO" id="GO:0003743">
    <property type="term" value="F:translation initiation factor activity"/>
    <property type="evidence" value="ECO:0007669"/>
    <property type="project" value="UniProtKB-UniRule"/>
</dbReference>
<dbReference type="GO" id="GO:0001732">
    <property type="term" value="P:formation of cytoplasmic translation initiation complex"/>
    <property type="evidence" value="ECO:0007669"/>
    <property type="project" value="UniProtKB-UniRule"/>
</dbReference>
<dbReference type="CDD" id="cd21378">
    <property type="entry name" value="eIF3E"/>
    <property type="match status" value="1"/>
</dbReference>
<dbReference type="HAMAP" id="MF_03004">
    <property type="entry name" value="eIF3e"/>
    <property type="match status" value="1"/>
</dbReference>
<dbReference type="InterPro" id="IPR016650">
    <property type="entry name" value="eIF3e"/>
</dbReference>
<dbReference type="InterPro" id="IPR019010">
    <property type="entry name" value="eIF3e_N"/>
</dbReference>
<dbReference type="InterPro" id="IPR000717">
    <property type="entry name" value="PCI_dom"/>
</dbReference>
<dbReference type="InterPro" id="IPR036390">
    <property type="entry name" value="WH_DNA-bd_sf"/>
</dbReference>
<dbReference type="PANTHER" id="PTHR10317">
    <property type="entry name" value="EUKARYOTIC TRANSLATION INITIATION FACTOR 3 SUBUNIT E"/>
    <property type="match status" value="1"/>
</dbReference>
<dbReference type="Pfam" id="PF09440">
    <property type="entry name" value="eIF3_N"/>
    <property type="match status" value="1"/>
</dbReference>
<dbReference type="Pfam" id="PF01399">
    <property type="entry name" value="PCI"/>
    <property type="match status" value="1"/>
</dbReference>
<dbReference type="PIRSF" id="PIRSF016255">
    <property type="entry name" value="eIF3e_su6"/>
    <property type="match status" value="1"/>
</dbReference>
<dbReference type="SMART" id="SM01186">
    <property type="entry name" value="eIF3_N"/>
    <property type="match status" value="1"/>
</dbReference>
<dbReference type="SMART" id="SM00088">
    <property type="entry name" value="PINT"/>
    <property type="match status" value="1"/>
</dbReference>
<dbReference type="SUPFAM" id="SSF46785">
    <property type="entry name" value="Winged helix' DNA-binding domain"/>
    <property type="match status" value="1"/>
</dbReference>
<dbReference type="PROSITE" id="PS50250">
    <property type="entry name" value="PCI"/>
    <property type="match status" value="1"/>
</dbReference>
<comment type="function">
    <text evidence="2">Component of the eukaryotic translation initiation factor 3 (eIF-3) complex, which is involved in protein synthesis of a specialized repertoire of mRNAs and, together with other initiation factors, stimulates binding of mRNA and methionyl-tRNAi to the 40S ribosome. The eIF-3 complex specifically targets and initiates translation of a subset of mRNAs involved in cell proliferation.</text>
</comment>
<comment type="subunit">
    <text evidence="1 2">Component of the eukaryotic translation initiation factor 3 (eIF-3) complex. The eIF-3 complex interacts with pix. Interacts with mxt (By similarity).</text>
</comment>
<comment type="subcellular location">
    <subcellularLocation>
        <location evidence="2">Cytoplasm</location>
    </subcellularLocation>
</comment>
<comment type="similarity">
    <text evidence="2">Belongs to the eIF-3 subunit E family.</text>
</comment>
<name>EIF3E_DROGR</name>